<evidence type="ECO:0000255" key="1">
    <source>
        <dbReference type="HAMAP-Rule" id="MF_00436"/>
    </source>
</evidence>
<evidence type="ECO:0000255" key="2">
    <source>
        <dbReference type="PROSITE-ProRule" id="PRU01346"/>
    </source>
</evidence>
<evidence type="ECO:0000256" key="3">
    <source>
        <dbReference type="SAM" id="MobiDB-lite"/>
    </source>
</evidence>
<organism>
    <name type="scientific">Escherichia coli O6:K15:H31 (strain 536 / UPEC)</name>
    <dbReference type="NCBI Taxonomy" id="362663"/>
    <lineage>
        <taxon>Bacteria</taxon>
        <taxon>Pseudomonadati</taxon>
        <taxon>Pseudomonadota</taxon>
        <taxon>Gammaproteobacteria</taxon>
        <taxon>Enterobacterales</taxon>
        <taxon>Enterobacteriaceae</taxon>
        <taxon>Escherichia</taxon>
    </lineage>
</organism>
<reference key="1">
    <citation type="journal article" date="2006" name="Mol. Microbiol.">
        <title>Role of pathogenicity island-associated integrases in the genome plasticity of uropathogenic Escherichia coli strain 536.</title>
        <authorList>
            <person name="Hochhut B."/>
            <person name="Wilde C."/>
            <person name="Balling G."/>
            <person name="Middendorf B."/>
            <person name="Dobrindt U."/>
            <person name="Brzuszkiewicz E."/>
            <person name="Gottschalk G."/>
            <person name="Carniel E."/>
            <person name="Hacker J."/>
        </authorList>
    </citation>
    <scope>NUCLEOTIDE SEQUENCE [LARGE SCALE GENOMIC DNA]</scope>
    <source>
        <strain>536 / UPEC</strain>
    </source>
</reference>
<comment type="function">
    <text evidence="1">RNA chaperone that binds small regulatory RNA (sRNAs) and mRNAs to facilitate mRNA translational regulation in response to envelope stress, environmental stress and changes in metabolite concentrations. Also binds with high specificity to tRNAs.</text>
</comment>
<comment type="subunit">
    <text evidence="1">Homohexamer.</text>
</comment>
<comment type="similarity">
    <text evidence="1">Belongs to the Hfq family.</text>
</comment>
<gene>
    <name evidence="1" type="primary">hfq</name>
    <name type="ordered locus">ECP_4417</name>
</gene>
<accession>Q0T9M1</accession>
<keyword id="KW-0694">RNA-binding</keyword>
<keyword id="KW-0346">Stress response</keyword>
<dbReference type="EMBL" id="CP000247">
    <property type="protein sequence ID" value="ABG72358.1"/>
    <property type="molecule type" value="Genomic_DNA"/>
</dbReference>
<dbReference type="RefSeq" id="WP_001051883.1">
    <property type="nucleotide sequence ID" value="NC_008253.1"/>
</dbReference>
<dbReference type="SMR" id="Q0T9M1"/>
<dbReference type="GeneID" id="93777649"/>
<dbReference type="KEGG" id="ecp:ECP_4417"/>
<dbReference type="HOGENOM" id="CLU_113688_2_1_6"/>
<dbReference type="Proteomes" id="UP000009182">
    <property type="component" value="Chromosome"/>
</dbReference>
<dbReference type="GO" id="GO:0005829">
    <property type="term" value="C:cytosol"/>
    <property type="evidence" value="ECO:0007669"/>
    <property type="project" value="TreeGrafter"/>
</dbReference>
<dbReference type="GO" id="GO:0003723">
    <property type="term" value="F:RNA binding"/>
    <property type="evidence" value="ECO:0007669"/>
    <property type="project" value="UniProtKB-UniRule"/>
</dbReference>
<dbReference type="GO" id="GO:0006355">
    <property type="term" value="P:regulation of DNA-templated transcription"/>
    <property type="evidence" value="ECO:0007669"/>
    <property type="project" value="InterPro"/>
</dbReference>
<dbReference type="GO" id="GO:0043487">
    <property type="term" value="P:regulation of RNA stability"/>
    <property type="evidence" value="ECO:0007669"/>
    <property type="project" value="TreeGrafter"/>
</dbReference>
<dbReference type="GO" id="GO:0045974">
    <property type="term" value="P:regulation of translation, ncRNA-mediated"/>
    <property type="evidence" value="ECO:0007669"/>
    <property type="project" value="TreeGrafter"/>
</dbReference>
<dbReference type="CDD" id="cd01716">
    <property type="entry name" value="Hfq"/>
    <property type="match status" value="1"/>
</dbReference>
<dbReference type="FunFam" id="2.30.30.100:FF:000001">
    <property type="entry name" value="RNA-binding protein Hfq"/>
    <property type="match status" value="1"/>
</dbReference>
<dbReference type="Gene3D" id="2.30.30.100">
    <property type="match status" value="1"/>
</dbReference>
<dbReference type="HAMAP" id="MF_00436">
    <property type="entry name" value="Hfq"/>
    <property type="match status" value="1"/>
</dbReference>
<dbReference type="InterPro" id="IPR005001">
    <property type="entry name" value="Hfq"/>
</dbReference>
<dbReference type="InterPro" id="IPR010920">
    <property type="entry name" value="LSM_dom_sf"/>
</dbReference>
<dbReference type="InterPro" id="IPR047575">
    <property type="entry name" value="Sm"/>
</dbReference>
<dbReference type="NCBIfam" id="TIGR02383">
    <property type="entry name" value="Hfq"/>
    <property type="match status" value="1"/>
</dbReference>
<dbReference type="NCBIfam" id="NF001602">
    <property type="entry name" value="PRK00395.1"/>
    <property type="match status" value="1"/>
</dbReference>
<dbReference type="PANTHER" id="PTHR34772">
    <property type="entry name" value="RNA-BINDING PROTEIN HFQ"/>
    <property type="match status" value="1"/>
</dbReference>
<dbReference type="PANTHER" id="PTHR34772:SF1">
    <property type="entry name" value="RNA-BINDING PROTEIN HFQ"/>
    <property type="match status" value="1"/>
</dbReference>
<dbReference type="Pfam" id="PF17209">
    <property type="entry name" value="Hfq"/>
    <property type="match status" value="1"/>
</dbReference>
<dbReference type="SUPFAM" id="SSF50182">
    <property type="entry name" value="Sm-like ribonucleoproteins"/>
    <property type="match status" value="1"/>
</dbReference>
<dbReference type="PROSITE" id="PS52002">
    <property type="entry name" value="SM"/>
    <property type="match status" value="1"/>
</dbReference>
<feature type="chain" id="PRO_0000265155" description="RNA-binding protein Hfq">
    <location>
        <begin position="1"/>
        <end position="102"/>
    </location>
</feature>
<feature type="domain" description="Sm" evidence="2">
    <location>
        <begin position="9"/>
        <end position="68"/>
    </location>
</feature>
<feature type="region of interest" description="Disordered" evidence="3">
    <location>
        <begin position="63"/>
        <end position="102"/>
    </location>
</feature>
<feature type="compositionally biased region" description="Polar residues" evidence="3">
    <location>
        <begin position="70"/>
        <end position="96"/>
    </location>
</feature>
<proteinExistence type="inferred from homology"/>
<name>HFQ_ECOL5</name>
<protein>
    <recommendedName>
        <fullName evidence="1">RNA-binding protein Hfq</fullName>
    </recommendedName>
</protein>
<sequence>MAKGQSLQDPFLNALRRERVPVSIYLVNGIKLQGQIESFDQFVILLKNTVSQMVYKHAISTVVPSRPVSHHSNNAGGGTSSNYHHGSSAQNTSAQQDSEETE</sequence>